<feature type="chain" id="PRO_0000184960" description="Centromere/kinetochore protein zw10">
    <location>
        <begin position="1"/>
        <end position="721"/>
    </location>
</feature>
<feature type="sequence conflict" description="In Ref. 1; CAB76122." evidence="6" ref="1">
    <original>L</original>
    <variation>M</variation>
    <location>
        <position position="58"/>
    </location>
</feature>
<feature type="sequence conflict" description="In Ref. 1; CAB76122." evidence="6" ref="1">
    <original>D</original>
    <variation>A</variation>
    <location>
        <position position="203"/>
    </location>
</feature>
<feature type="sequence conflict" description="In Ref. 4; CAB72295." evidence="6" ref="4">
    <original>C</original>
    <variation>A</variation>
    <location>
        <position position="248"/>
    </location>
</feature>
<feature type="sequence conflict" description="In Ref. 2; AAF45794." evidence="6" ref="2">
    <original>HV</original>
    <variation>QL</variation>
    <location>
        <begin position="293"/>
        <end position="294"/>
    </location>
</feature>
<feature type="sequence conflict" description="In Ref. 1; CAB76122." evidence="6" ref="1">
    <original>V</original>
    <variation>A</variation>
    <location>
        <position position="366"/>
    </location>
</feature>
<feature type="sequence conflict" description="In Ref. 4; CAB72295/CAB65854." evidence="6" ref="4">
    <original>D</original>
    <variation>H</variation>
    <location>
        <position position="626"/>
    </location>
</feature>
<reference key="1">
    <citation type="journal article" date="1992" name="J. Cell Biol.">
        <title>The Drosophila l(1)zw10 gene product, required for accurate mitotic chromosome segregation, is redistributed at anaphase onset.</title>
        <authorList>
            <person name="Williams B.C."/>
            <person name="Karr T.L."/>
            <person name="Montgomery J.M."/>
            <person name="Goldberg M.L."/>
        </authorList>
    </citation>
    <scope>NUCLEOTIDE SEQUENCE [MRNA]</scope>
    <scope>SUBCELLULAR LOCATION</scope>
    <scope>DEVELOPMENTAL STAGE</scope>
    <source>
        <tissue>Imaginal disk</tissue>
    </source>
</reference>
<reference key="2">
    <citation type="journal article" date="2000" name="Science">
        <title>The genome sequence of Drosophila melanogaster.</title>
        <authorList>
            <person name="Adams M.D."/>
            <person name="Celniker S.E."/>
            <person name="Holt R.A."/>
            <person name="Evans C.A."/>
            <person name="Gocayne J.D."/>
            <person name="Amanatides P.G."/>
            <person name="Scherer S.E."/>
            <person name="Li P.W."/>
            <person name="Hoskins R.A."/>
            <person name="Galle R.F."/>
            <person name="George R.A."/>
            <person name="Lewis S.E."/>
            <person name="Richards S."/>
            <person name="Ashburner M."/>
            <person name="Henderson S.N."/>
            <person name="Sutton G.G."/>
            <person name="Wortman J.R."/>
            <person name="Yandell M.D."/>
            <person name="Zhang Q."/>
            <person name="Chen L.X."/>
            <person name="Brandon R.C."/>
            <person name="Rogers Y.-H.C."/>
            <person name="Blazej R.G."/>
            <person name="Champe M."/>
            <person name="Pfeiffer B.D."/>
            <person name="Wan K.H."/>
            <person name="Doyle C."/>
            <person name="Baxter E.G."/>
            <person name="Helt G."/>
            <person name="Nelson C.R."/>
            <person name="Miklos G.L.G."/>
            <person name="Abril J.F."/>
            <person name="Agbayani A."/>
            <person name="An H.-J."/>
            <person name="Andrews-Pfannkoch C."/>
            <person name="Baldwin D."/>
            <person name="Ballew R.M."/>
            <person name="Basu A."/>
            <person name="Baxendale J."/>
            <person name="Bayraktaroglu L."/>
            <person name="Beasley E.M."/>
            <person name="Beeson K.Y."/>
            <person name="Benos P.V."/>
            <person name="Berman B.P."/>
            <person name="Bhandari D."/>
            <person name="Bolshakov S."/>
            <person name="Borkova D."/>
            <person name="Botchan M.R."/>
            <person name="Bouck J."/>
            <person name="Brokstein P."/>
            <person name="Brottier P."/>
            <person name="Burtis K.C."/>
            <person name="Busam D.A."/>
            <person name="Butler H."/>
            <person name="Cadieu E."/>
            <person name="Center A."/>
            <person name="Chandra I."/>
            <person name="Cherry J.M."/>
            <person name="Cawley S."/>
            <person name="Dahlke C."/>
            <person name="Davenport L.B."/>
            <person name="Davies P."/>
            <person name="de Pablos B."/>
            <person name="Delcher A."/>
            <person name="Deng Z."/>
            <person name="Mays A.D."/>
            <person name="Dew I."/>
            <person name="Dietz S.M."/>
            <person name="Dodson K."/>
            <person name="Doup L.E."/>
            <person name="Downes M."/>
            <person name="Dugan-Rocha S."/>
            <person name="Dunkov B.C."/>
            <person name="Dunn P."/>
            <person name="Durbin K.J."/>
            <person name="Evangelista C.C."/>
            <person name="Ferraz C."/>
            <person name="Ferriera S."/>
            <person name="Fleischmann W."/>
            <person name="Fosler C."/>
            <person name="Gabrielian A.E."/>
            <person name="Garg N.S."/>
            <person name="Gelbart W.M."/>
            <person name="Glasser K."/>
            <person name="Glodek A."/>
            <person name="Gong F."/>
            <person name="Gorrell J.H."/>
            <person name="Gu Z."/>
            <person name="Guan P."/>
            <person name="Harris M."/>
            <person name="Harris N.L."/>
            <person name="Harvey D.A."/>
            <person name="Heiman T.J."/>
            <person name="Hernandez J.R."/>
            <person name="Houck J."/>
            <person name="Hostin D."/>
            <person name="Houston K.A."/>
            <person name="Howland T.J."/>
            <person name="Wei M.-H."/>
            <person name="Ibegwam C."/>
            <person name="Jalali M."/>
            <person name="Kalush F."/>
            <person name="Karpen G.H."/>
            <person name="Ke Z."/>
            <person name="Kennison J.A."/>
            <person name="Ketchum K.A."/>
            <person name="Kimmel B.E."/>
            <person name="Kodira C.D."/>
            <person name="Kraft C.L."/>
            <person name="Kravitz S."/>
            <person name="Kulp D."/>
            <person name="Lai Z."/>
            <person name="Lasko P."/>
            <person name="Lei Y."/>
            <person name="Levitsky A.A."/>
            <person name="Li J.H."/>
            <person name="Li Z."/>
            <person name="Liang Y."/>
            <person name="Lin X."/>
            <person name="Liu X."/>
            <person name="Mattei B."/>
            <person name="McIntosh T.C."/>
            <person name="McLeod M.P."/>
            <person name="McPherson D."/>
            <person name="Merkulov G."/>
            <person name="Milshina N.V."/>
            <person name="Mobarry C."/>
            <person name="Morris J."/>
            <person name="Moshrefi A."/>
            <person name="Mount S.M."/>
            <person name="Moy M."/>
            <person name="Murphy B."/>
            <person name="Murphy L."/>
            <person name="Muzny D.M."/>
            <person name="Nelson D.L."/>
            <person name="Nelson D.R."/>
            <person name="Nelson K.A."/>
            <person name="Nixon K."/>
            <person name="Nusskern D.R."/>
            <person name="Pacleb J.M."/>
            <person name="Palazzolo M."/>
            <person name="Pittman G.S."/>
            <person name="Pan S."/>
            <person name="Pollard J."/>
            <person name="Puri V."/>
            <person name="Reese M.G."/>
            <person name="Reinert K."/>
            <person name="Remington K."/>
            <person name="Saunders R.D.C."/>
            <person name="Scheeler F."/>
            <person name="Shen H."/>
            <person name="Shue B.C."/>
            <person name="Siden-Kiamos I."/>
            <person name="Simpson M."/>
            <person name="Skupski M.P."/>
            <person name="Smith T.J."/>
            <person name="Spier E."/>
            <person name="Spradling A.C."/>
            <person name="Stapleton M."/>
            <person name="Strong R."/>
            <person name="Sun E."/>
            <person name="Svirskas R."/>
            <person name="Tector C."/>
            <person name="Turner R."/>
            <person name="Venter E."/>
            <person name="Wang A.H."/>
            <person name="Wang X."/>
            <person name="Wang Z.-Y."/>
            <person name="Wassarman D.A."/>
            <person name="Weinstock G.M."/>
            <person name="Weissenbach J."/>
            <person name="Williams S.M."/>
            <person name="Woodage T."/>
            <person name="Worley K.C."/>
            <person name="Wu D."/>
            <person name="Yang S."/>
            <person name="Yao Q.A."/>
            <person name="Ye J."/>
            <person name="Yeh R.-F."/>
            <person name="Zaveri J.S."/>
            <person name="Zhan M."/>
            <person name="Zhang G."/>
            <person name="Zhao Q."/>
            <person name="Zheng L."/>
            <person name="Zheng X.H."/>
            <person name="Zhong F.N."/>
            <person name="Zhong W."/>
            <person name="Zhou X."/>
            <person name="Zhu S.C."/>
            <person name="Zhu X."/>
            <person name="Smith H.O."/>
            <person name="Gibbs R.A."/>
            <person name="Myers E.W."/>
            <person name="Rubin G.M."/>
            <person name="Venter J.C."/>
        </authorList>
    </citation>
    <scope>NUCLEOTIDE SEQUENCE [LARGE SCALE GENOMIC DNA]</scope>
    <source>
        <strain>Berkeley</strain>
    </source>
</reference>
<reference key="3">
    <citation type="journal article" date="2002" name="Genome Biol.">
        <title>Annotation of the Drosophila melanogaster euchromatic genome: a systematic review.</title>
        <authorList>
            <person name="Misra S."/>
            <person name="Crosby M.A."/>
            <person name="Mungall C.J."/>
            <person name="Matthews B.B."/>
            <person name="Campbell K.S."/>
            <person name="Hradecky P."/>
            <person name="Huang Y."/>
            <person name="Kaminker J.S."/>
            <person name="Millburn G.H."/>
            <person name="Prochnik S.E."/>
            <person name="Smith C.D."/>
            <person name="Tupy J.L."/>
            <person name="Whitfield E.J."/>
            <person name="Bayraktaroglu L."/>
            <person name="Berman B.P."/>
            <person name="Bettencourt B.R."/>
            <person name="Celniker S.E."/>
            <person name="de Grey A.D.N.J."/>
            <person name="Drysdale R.A."/>
            <person name="Harris N.L."/>
            <person name="Richter J."/>
            <person name="Russo S."/>
            <person name="Schroeder A.J."/>
            <person name="Shu S.Q."/>
            <person name="Stapleton M."/>
            <person name="Yamada C."/>
            <person name="Ashburner M."/>
            <person name="Gelbart W.M."/>
            <person name="Rubin G.M."/>
            <person name="Lewis S.E."/>
        </authorList>
    </citation>
    <scope>GENOME REANNOTATION</scope>
    <source>
        <strain>Berkeley</strain>
    </source>
</reference>
<reference key="4">
    <citation type="journal article" date="2000" name="Science">
        <title>From sequence to chromosome: the tip of the X chromosome of D. melanogaster.</title>
        <authorList>
            <person name="Benos P.V."/>
            <person name="Gatt M.K."/>
            <person name="Ashburner M."/>
            <person name="Murphy L."/>
            <person name="Harris D."/>
            <person name="Barrell B.G."/>
            <person name="Ferraz C."/>
            <person name="Vidal S."/>
            <person name="Brun C."/>
            <person name="Demailles J."/>
            <person name="Cadieu E."/>
            <person name="Dreano S."/>
            <person name="Gloux S."/>
            <person name="Lelaure V."/>
            <person name="Mottier S."/>
            <person name="Galibert F."/>
            <person name="Borkova D."/>
            <person name="Minana B."/>
            <person name="Kafatos F.C."/>
            <person name="Louis C."/>
            <person name="Siden-Kiamos I."/>
            <person name="Bolshakov S."/>
            <person name="Papagiannakis G."/>
            <person name="Spanos L."/>
            <person name="Cox S."/>
            <person name="Madueno E."/>
            <person name="de Pablos B."/>
            <person name="Modolell J."/>
            <person name="Peter A."/>
            <person name="Schoettler P."/>
            <person name="Werner M."/>
            <person name="Mourkioti F."/>
            <person name="Beinert N."/>
            <person name="Dowe G."/>
            <person name="Schaefer U."/>
            <person name="Jaeckle H."/>
            <person name="Bucheton A."/>
            <person name="Callister D.M."/>
            <person name="Campbell L.A."/>
            <person name="Darlamitsou A."/>
            <person name="Henderson N.S."/>
            <person name="McMillan P.J."/>
            <person name="Salles C."/>
            <person name="Tait E.A."/>
            <person name="Valenti P."/>
            <person name="Saunders R.D.C."/>
            <person name="Glover D.M."/>
        </authorList>
    </citation>
    <scope>NUCLEOTIDE SEQUENCE [LARGE SCALE GENOMIC DNA]</scope>
    <source>
        <strain>Oregon-R</strain>
    </source>
</reference>
<reference key="5">
    <citation type="journal article" date="2003" name="Mol. Biol. Cell">
        <title>Zwilch, a new component of the ZW10/ROD complex required for kinetochore functions.</title>
        <authorList>
            <person name="Williams B.C."/>
            <person name="Li Z."/>
            <person name="Liu S."/>
            <person name="Williams E.V."/>
            <person name="Leung G."/>
            <person name="Yen T.J."/>
            <person name="Goldberg M.L."/>
        </authorList>
    </citation>
    <scope>IDENTIFICATION IN THE RZZ COMPLEX</scope>
</reference>
<reference key="6">
    <citation type="journal article" date="2005" name="Curr. Biol.">
        <title>Recruitment of Mad2 to the kinetochore requires the Rod/Zw10 complex.</title>
        <authorList>
            <person name="Buffin E."/>
            <person name="Lefebvre C."/>
            <person name="Huang J."/>
            <person name="Gagou M.E."/>
            <person name="Karess R.E."/>
        </authorList>
    </citation>
    <scope>FUNCTION</scope>
</reference>
<reference key="7">
    <citation type="journal article" date="2007" name="J. Cell Biol.">
        <title>Spindly, a novel protein essential for silencing the spindle assembly checkpoint, recruits dynein to the kinetochore.</title>
        <authorList>
            <person name="Griffis E.R."/>
            <person name="Stuurman N."/>
            <person name="Vale R.D."/>
        </authorList>
    </citation>
    <scope>FUNCTION</scope>
</reference>
<reference key="8">
    <citation type="journal article" date="2012" name="J. Cell Sci.">
        <title>The Drosophila RZZ complex - roles in membrane trafficking and cytokinesis.</title>
        <authorList>
            <person name="Wainman A."/>
            <person name="Giansanti M.G."/>
            <person name="Goldberg M.L."/>
            <person name="Gatti M."/>
        </authorList>
    </citation>
    <scope>FUNCTION</scope>
    <scope>SUBCELLULAR LOCATION</scope>
    <scope>DISRUPTION PHENOTYPE</scope>
    <scope>INTERACTION WITH ZWILCH AND ROD</scope>
</reference>
<accession>Q9W4X9</accession>
<name>ZW10_DROME</name>
<keyword id="KW-0131">Cell cycle</keyword>
<keyword id="KW-0132">Cell division</keyword>
<keyword id="KW-0137">Centromere</keyword>
<keyword id="KW-0158">Chromosome</keyword>
<keyword id="KW-0963">Cytoplasm</keyword>
<keyword id="KW-0206">Cytoskeleton</keyword>
<keyword id="KW-0333">Golgi apparatus</keyword>
<keyword id="KW-0995">Kinetochore</keyword>
<keyword id="KW-0469">Meiosis</keyword>
<keyword id="KW-0498">Mitosis</keyword>
<keyword id="KW-0539">Nucleus</keyword>
<keyword id="KW-1185">Reference proteome</keyword>
<dbReference type="EMBL" id="X64390">
    <property type="protein sequence ID" value="CAB76122.1"/>
    <property type="molecule type" value="mRNA"/>
</dbReference>
<dbReference type="EMBL" id="AE014298">
    <property type="protein sequence ID" value="AAF45794.1"/>
    <property type="molecule type" value="Genomic_DNA"/>
</dbReference>
<dbReference type="EMBL" id="AL138972">
    <property type="protein sequence ID" value="CAB72295.1"/>
    <property type="molecule type" value="Genomic_DNA"/>
</dbReference>
<dbReference type="EMBL" id="AL121804">
    <property type="protein sequence ID" value="CAB72295.1"/>
    <property type="status" value="JOINED"/>
    <property type="molecule type" value="Genomic_DNA"/>
</dbReference>
<dbReference type="EMBL" id="AL121804">
    <property type="protein sequence ID" value="CAB65854.1"/>
    <property type="molecule type" value="Genomic_DNA"/>
</dbReference>
<dbReference type="PIR" id="A43275">
    <property type="entry name" value="A43275"/>
</dbReference>
<dbReference type="RefSeq" id="NP_524901.2">
    <property type="nucleotide sequence ID" value="NM_080162.4"/>
</dbReference>
<dbReference type="SMR" id="Q9W4X9"/>
<dbReference type="BioGRID" id="71022">
    <property type="interactions" value="21"/>
</dbReference>
<dbReference type="ComplexPortal" id="CPX-2633">
    <property type="entry name" value="RZZ complex"/>
</dbReference>
<dbReference type="FunCoup" id="Q9W4X9">
    <property type="interactions" value="1806"/>
</dbReference>
<dbReference type="IntAct" id="Q9W4X9">
    <property type="interactions" value="2"/>
</dbReference>
<dbReference type="STRING" id="7227.FBpp0070425"/>
<dbReference type="PaxDb" id="7227-FBpp0070425"/>
<dbReference type="EnsemblMetazoa" id="FBtr0070441">
    <property type="protein sequence ID" value="FBpp0070425"/>
    <property type="gene ID" value="FBgn0004643"/>
</dbReference>
<dbReference type="GeneID" id="47874"/>
<dbReference type="KEGG" id="dme:Dmel_CG9900"/>
<dbReference type="AGR" id="FB:FBgn0004643"/>
<dbReference type="CTD" id="9183"/>
<dbReference type="FlyBase" id="FBgn0004643">
    <property type="gene designation" value="Zw10"/>
</dbReference>
<dbReference type="VEuPathDB" id="VectorBase:FBgn0004643"/>
<dbReference type="eggNOG" id="KOG2163">
    <property type="taxonomic scope" value="Eukaryota"/>
</dbReference>
<dbReference type="GeneTree" id="ENSGT00390000016427"/>
<dbReference type="HOGENOM" id="CLU_012948_0_0_1"/>
<dbReference type="InParanoid" id="Q9W4X9"/>
<dbReference type="OrthoDB" id="534815at2759"/>
<dbReference type="PhylomeDB" id="Q9W4X9"/>
<dbReference type="Reactome" id="R-DME-6811434">
    <property type="pathway name" value="COPI-dependent Golgi-to-ER retrograde traffic"/>
</dbReference>
<dbReference type="BioGRID-ORCS" id="47874">
    <property type="hits" value="0 hits in 1 CRISPR screen"/>
</dbReference>
<dbReference type="GenomeRNAi" id="47874"/>
<dbReference type="PRO" id="PR:Q9W4X9"/>
<dbReference type="Proteomes" id="UP000000803">
    <property type="component" value="Chromosome X"/>
</dbReference>
<dbReference type="Bgee" id="FBgn0004643">
    <property type="expression patterns" value="Expressed in secondary oocyte and 71 other cell types or tissues"/>
</dbReference>
<dbReference type="ExpressionAtlas" id="Q9W4X9">
    <property type="expression patterns" value="baseline and differential"/>
</dbReference>
<dbReference type="GO" id="GO:0036063">
    <property type="term" value="C:acroblast"/>
    <property type="evidence" value="ECO:0000314"/>
    <property type="project" value="FlyBase"/>
</dbReference>
<dbReference type="GO" id="GO:0070939">
    <property type="term" value="C:Dsl1/NZR complex"/>
    <property type="evidence" value="ECO:0000250"/>
    <property type="project" value="FlyBase"/>
</dbReference>
<dbReference type="GO" id="GO:0005783">
    <property type="term" value="C:endoplasmic reticulum"/>
    <property type="evidence" value="ECO:0000250"/>
    <property type="project" value="FlyBase"/>
</dbReference>
<dbReference type="GO" id="GO:0005795">
    <property type="term" value="C:Golgi stack"/>
    <property type="evidence" value="ECO:0000314"/>
    <property type="project" value="FlyBase"/>
</dbReference>
<dbReference type="GO" id="GO:0000776">
    <property type="term" value="C:kinetochore"/>
    <property type="evidence" value="ECO:0000314"/>
    <property type="project" value="FlyBase"/>
</dbReference>
<dbReference type="GO" id="GO:0005828">
    <property type="term" value="C:kinetochore microtubule"/>
    <property type="evidence" value="ECO:0000314"/>
    <property type="project" value="FlyBase"/>
</dbReference>
<dbReference type="GO" id="GO:0005634">
    <property type="term" value="C:nucleus"/>
    <property type="evidence" value="ECO:0007669"/>
    <property type="project" value="UniProtKB-SubCell"/>
</dbReference>
<dbReference type="GO" id="GO:1990423">
    <property type="term" value="C:RZZ complex"/>
    <property type="evidence" value="ECO:0000314"/>
    <property type="project" value="FlyBase"/>
</dbReference>
<dbReference type="GO" id="GO:0051233">
    <property type="term" value="C:spindle midzone"/>
    <property type="evidence" value="ECO:0000314"/>
    <property type="project" value="FlyBase"/>
</dbReference>
<dbReference type="GO" id="GO:0031267">
    <property type="term" value="F:small GTPase binding"/>
    <property type="evidence" value="ECO:0000353"/>
    <property type="project" value="FlyBase"/>
</dbReference>
<dbReference type="GO" id="GO:0036090">
    <property type="term" value="P:cleavage furrow ingression"/>
    <property type="evidence" value="ECO:0000315"/>
    <property type="project" value="FlyBase"/>
</dbReference>
<dbReference type="GO" id="GO:0006888">
    <property type="term" value="P:endoplasmic reticulum to Golgi vesicle-mediated transport"/>
    <property type="evidence" value="ECO:0000318"/>
    <property type="project" value="GO_Central"/>
</dbReference>
<dbReference type="GO" id="GO:0007030">
    <property type="term" value="P:Golgi organization"/>
    <property type="evidence" value="ECO:0000315"/>
    <property type="project" value="FlyBase"/>
</dbReference>
<dbReference type="GO" id="GO:0048193">
    <property type="term" value="P:Golgi vesicle transport"/>
    <property type="evidence" value="ECO:0000250"/>
    <property type="project" value="FlyBase"/>
</dbReference>
<dbReference type="GO" id="GO:0007060">
    <property type="term" value="P:male meiosis chromosome segregation"/>
    <property type="evidence" value="ECO:0000315"/>
    <property type="project" value="FlyBase"/>
</dbReference>
<dbReference type="GO" id="GO:0007112">
    <property type="term" value="P:male meiosis cytokinesis"/>
    <property type="evidence" value="ECO:0000315"/>
    <property type="project" value="FlyBase"/>
</dbReference>
<dbReference type="GO" id="GO:0007107">
    <property type="term" value="P:membrane addition at site of cytokinesis"/>
    <property type="evidence" value="ECO:0000315"/>
    <property type="project" value="FlyBase"/>
</dbReference>
<dbReference type="GO" id="GO:0000070">
    <property type="term" value="P:mitotic sister chromatid segregation"/>
    <property type="evidence" value="ECO:0000315"/>
    <property type="project" value="FlyBase"/>
</dbReference>
<dbReference type="GO" id="GO:0007094">
    <property type="term" value="P:mitotic spindle assembly checkpoint signaling"/>
    <property type="evidence" value="ECO:0000315"/>
    <property type="project" value="FlyBase"/>
</dbReference>
<dbReference type="FunFam" id="1.10.357.150:FF:000003">
    <property type="entry name" value="Centromere/kinetochore protein zw10"/>
    <property type="match status" value="1"/>
</dbReference>
<dbReference type="Gene3D" id="1.10.357.150">
    <property type="match status" value="1"/>
</dbReference>
<dbReference type="InterPro" id="IPR046362">
    <property type="entry name" value="Zw10/DSL1_C_sf"/>
</dbReference>
<dbReference type="InterPro" id="IPR048343">
    <property type="entry name" value="ZW10_C"/>
</dbReference>
<dbReference type="InterPro" id="IPR055148">
    <property type="entry name" value="ZW10_C_2"/>
</dbReference>
<dbReference type="InterPro" id="IPR048344">
    <property type="entry name" value="Zw10_middle"/>
</dbReference>
<dbReference type="InterPro" id="IPR009361">
    <property type="entry name" value="Zw10_N"/>
</dbReference>
<dbReference type="PANTHER" id="PTHR12205">
    <property type="entry name" value="CENTROMERE/KINETOCHORE PROTEIN ZW10"/>
    <property type="match status" value="1"/>
</dbReference>
<dbReference type="PANTHER" id="PTHR12205:SF0">
    <property type="entry name" value="CENTROMERE_KINETOCHORE PROTEIN ZW10 HOMOLOG"/>
    <property type="match status" value="1"/>
</dbReference>
<dbReference type="Pfam" id="PF20666">
    <property type="entry name" value="ZW10_C"/>
    <property type="match status" value="1"/>
</dbReference>
<dbReference type="Pfam" id="PF22766">
    <property type="entry name" value="ZW10_C2"/>
    <property type="match status" value="1"/>
</dbReference>
<dbReference type="Pfam" id="PF20665">
    <property type="entry name" value="Zw10_middle"/>
    <property type="match status" value="1"/>
</dbReference>
<dbReference type="Pfam" id="PF06248">
    <property type="entry name" value="Zw10_N"/>
    <property type="match status" value="1"/>
</dbReference>
<evidence type="ECO:0000269" key="1">
    <source>
    </source>
</evidence>
<evidence type="ECO:0000269" key="2">
    <source>
    </source>
</evidence>
<evidence type="ECO:0000269" key="3">
    <source>
    </source>
</evidence>
<evidence type="ECO:0000269" key="4">
    <source>
    </source>
</evidence>
<evidence type="ECO:0000269" key="5">
    <source>
    </source>
</evidence>
<evidence type="ECO:0000305" key="6"/>
<comment type="function">
    <text evidence="3 4 5">Essential component of the mitotic checkpoint, which prevents cells from prematurely exiting mitosis (PubMed:15886105, PubMed:17576797). Required for the assembly of the dynein-dynactin, Mad2 complexes and spindly/CG15415 onto kinetochores (PubMed:15886105, PubMed:17576797). During cytokinesis in male meiotic cells it is required for completion of cleavage furrow ingression, possibly in conjunction with Rint1 (PubMed:22685323). Required for maintenance of Golgi stack number and morphology, and acroblast assembly (PubMed:22685323). Its function related to the spindle assembly machinery is proposed to depend on its association in the RZZ complex (PubMed:22685323). Failure to assemble the complex due to the absence of any one of its components, results in the incorrect redistribution of the remaining components to diverse membrane compartments (PubMed:22685323).</text>
</comment>
<comment type="subunit">
    <text evidence="1">Component of the RZZ complex composed of rod, Zw10 and Zwilch.</text>
</comment>
<comment type="subcellular location">
    <subcellularLocation>
        <location>Cytoplasm</location>
    </subcellularLocation>
    <subcellularLocation>
        <location>Nucleus</location>
    </subcellularLocation>
    <subcellularLocation>
        <location evidence="2 5">Chromosome</location>
        <location evidence="2 5">Centromere</location>
        <location evidence="2 5">Kinetochore</location>
    </subcellularLocation>
    <subcellularLocation>
        <location>Cytoplasm</location>
        <location>Cytoskeleton</location>
    </subcellularLocation>
    <subcellularLocation>
        <location evidence="5">Cytoplasm</location>
        <location evidence="5">Cytoskeleton</location>
        <location evidence="5">Spindle</location>
    </subcellularLocation>
    <subcellularLocation>
        <location evidence="5">Golgi apparatus</location>
    </subcellularLocation>
    <subcellularLocation>
        <location evidence="5">Golgi apparatus</location>
        <location evidence="5">Golgi stack</location>
    </subcellularLocation>
    <text evidence="2 5">Dynamic pattern of localization during the cell cycle (PubMed:22685323). Present in structures resembling Golgi stacks prior to their migration into the nuclear zone during prometaphase (PubMed:1339459, PubMed:22685323). At metaphase, detected at the kinetochores and kinetochore microtubules (PubMed:1339459, PubMed:22685323). During anaphase and telophase accumulates at the spindle envelope midzone and broad areas at the cell poles where they often become concentrated in small structures that resemble small Golgi-derived vesicles (PubMed:22685323). In late telophase they also form compact aggregates at the interior of the equatorial region of the cell (PubMed:22685323).</text>
</comment>
<comment type="developmental stage">
    <text evidence="2">Highest levels are found in embryo and adult. Levels decrease during the first and second larval instar and then decrease in third instar larvae and early pupae.</text>
</comment>
<comment type="disruption phenotype">
    <text evidence="5">In the spermatocytes the number of Golgi structures are reduced and they appear smaller or have collapsed Golgi stacks. In third instar larvae spermatocytes, cytokinesis is abnormal producing multinucleated spermatids with a single large Nebenkern. Acroblasts do not form and instead appear as an aggregate of multiple unfused vesicles. During anaphase and early-telophase the central spindle appears regular and acto-myosin contractile rings form normally but during mid-telophase the rings fail to constrict. By late-telophase the rings become fragmented, and the central spindle appears less dense, is irregularly shaped and eventually disassembles. Spermatocytes are unable to complete furrow ingression due to reduced plasma membrane formation during cytokinesis.</text>
</comment>
<comment type="similarity">
    <text evidence="6">Belongs to the ZW10 family.</text>
</comment>
<comment type="caution">
    <text evidence="6">It is uncertain whether Met-1, Met-44, Met-81 or Met-100 is the initiator.</text>
</comment>
<organism>
    <name type="scientific">Drosophila melanogaster</name>
    <name type="common">Fruit fly</name>
    <dbReference type="NCBI Taxonomy" id="7227"/>
    <lineage>
        <taxon>Eukaryota</taxon>
        <taxon>Metazoa</taxon>
        <taxon>Ecdysozoa</taxon>
        <taxon>Arthropoda</taxon>
        <taxon>Hexapoda</taxon>
        <taxon>Insecta</taxon>
        <taxon>Pterygota</taxon>
        <taxon>Neoptera</taxon>
        <taxon>Endopterygota</taxon>
        <taxon>Diptera</taxon>
        <taxon>Brachycera</taxon>
        <taxon>Muscomorpha</taxon>
        <taxon>Ephydroidea</taxon>
        <taxon>Drosophilidae</taxon>
        <taxon>Drosophila</taxon>
        <taxon>Sophophora</taxon>
    </lineage>
</organism>
<protein>
    <recommendedName>
        <fullName>Centromere/kinetochore protein zw10</fullName>
    </recommendedName>
    <alternativeName>
        <fullName>Mitotic 15 protein</fullName>
    </alternativeName>
</protein>
<proteinExistence type="evidence at protein level"/>
<sequence>MEEEAPRFNVLEEAFNGNGNGCANVEATQSAILKVLTRVNRFQMRVRKHIEDNYTEFLPNNTSPDIFLEESGSLNREIHDMLENLGSEGLDALDEANVKMAGNGRQLREILLGLGVSEHVLRIDELFQCVEEAKATKDYLVLLDLVGRLRAFIYGDDSVDGDAQVATPEVRRIFKALECYETIKVKYHVQAYMLQQSLQERFDRLVQLQCKSFPTSRCVTLQVSRDQTQLQDIVQALFQEPYNPARLCEFLLDNCIEPVIMRPVMADYSEEADGGTYVRLSLSYATKEPSSAHVRPNYKQVLENLRLLLHTLAGINCSVSRDQHVFGIIGDHVKDKMLKLLVDECLIPAVPESTEEYQTSTLCEDVAQLEQLLVDSFIINPEQDRALGQFVEKYETYYRNRMYRRVLETAREIIQRDLQDMVLVAPNNHSAEVANDPFLFPRCMISKSAQDFVKLMDRILRQPTDKLGDQEADPIAGVISIMLHTYINEVPKVHRKLLESIPQQAVLFHNNCMFFTHWVAQHANKGIESLAALAKTLQATGQQHFRVQVDYQSSILMGIMQEFEFESTHTLGSGPLKLVRQCLRQLELLKNVWANVLPETVYNATFCELINTFVAELIRRVFTLRDISAQMACELSDLIDVVLQRAPTLFREPNEVVQVLSWLKLQQLKAMLNASLMEITELWGDGVGPLTASYKSDEIKHLIRALFQDTDWRAKAITQIV</sequence>
<gene>
    <name type="primary">Zw10</name>
    <name type="synonym">mit(1)15</name>
    <name type="ORF">CG9900</name>
</gene>